<gene>
    <name evidence="1" type="primary">norR</name>
    <name type="ordered locus">SSON_2853</name>
</gene>
<comment type="function">
    <text evidence="1">Required for the expression of anaerobic nitric oxide (NO) reductase, acts as a transcriptional activator for at least the norVW operon. Activation also requires sigma-54.</text>
</comment>
<comment type="pathway">
    <text evidence="1">Nitrogen metabolism; nitric oxide reduction.</text>
</comment>
<comment type="sequence caution" evidence="2">
    <conflict type="erroneous initiation">
        <sequence resource="EMBL-CDS" id="AAZ89457"/>
    </conflict>
</comment>
<feature type="chain" id="PRO_0000305627" description="Anaerobic nitric oxide reductase transcription regulator NorR">
    <location>
        <begin position="1"/>
        <end position="504"/>
    </location>
</feature>
<feature type="domain" description="Sigma-54 factor interaction" evidence="1">
    <location>
        <begin position="187"/>
        <end position="416"/>
    </location>
</feature>
<feature type="DNA-binding region" description="H-T-H motif" evidence="1">
    <location>
        <begin position="479"/>
        <end position="498"/>
    </location>
</feature>
<feature type="binding site" evidence="1">
    <location>
        <begin position="215"/>
        <end position="222"/>
    </location>
    <ligand>
        <name>ATP</name>
        <dbReference type="ChEBI" id="CHEBI:30616"/>
    </ligand>
</feature>
<feature type="binding site" evidence="1">
    <location>
        <begin position="278"/>
        <end position="287"/>
    </location>
    <ligand>
        <name>ATP</name>
        <dbReference type="ChEBI" id="CHEBI:30616"/>
    </ligand>
</feature>
<feature type="modified residue" description="4-aspartylphosphate" evidence="1">
    <location>
        <position position="57"/>
    </location>
</feature>
<evidence type="ECO:0000255" key="1">
    <source>
        <dbReference type="HAMAP-Rule" id="MF_01314"/>
    </source>
</evidence>
<evidence type="ECO:0000305" key="2"/>
<organism>
    <name type="scientific">Shigella sonnei (strain Ss046)</name>
    <dbReference type="NCBI Taxonomy" id="300269"/>
    <lineage>
        <taxon>Bacteria</taxon>
        <taxon>Pseudomonadati</taxon>
        <taxon>Pseudomonadota</taxon>
        <taxon>Gammaproteobacteria</taxon>
        <taxon>Enterobacterales</taxon>
        <taxon>Enterobacteriaceae</taxon>
        <taxon>Shigella</taxon>
    </lineage>
</organism>
<keyword id="KW-0067">ATP-binding</keyword>
<keyword id="KW-0238">DNA-binding</keyword>
<keyword id="KW-0547">Nucleotide-binding</keyword>
<keyword id="KW-0597">Phosphoprotein</keyword>
<keyword id="KW-1185">Reference proteome</keyword>
<keyword id="KW-0804">Transcription</keyword>
<keyword id="KW-0805">Transcription regulation</keyword>
<sequence>MSFSVDVLANIAIELQRGIGHQDRFQRLITTLRQVLECDASALLRYDSRQFIPLAIDGLAKDVLGRRFALEGHPRLEAIARAGDVVRFPADSELPDPYDGLIPGQESLKVHACVGLPLFAGQNLIGALTLDGMQPDQFDVFSDEELRLIAALAAGALSNALLIEQLESQNMMPGDATPFEAVKQTQMIGLSPGMTQLKKEIEIVAASDLNVLISGETGTGKELVAKAIHEASPRAVNPLVYLNCAALPESVAESELFGHVKGAFTGAISNRSGKFEMADNGTLFLDEIGELSLALQAKLLRVLQYGDIQRVGDDRSLRVDVRVLAATNRDLREEVMAGRFRADLFHRLSVFPLSVPPLRERGDDVILLAGYFCEQCRLRLGLSRVVLSAGARNLLQHYRFPGNVRELEHAIHRAVVLARATRNGDEVILEAQHFAFPEVTLPPPEAAAVPVVKQNLREATEAFQRETIRQALAQNHHNWAACARMLETDVANLHRLAKRLGMKD</sequence>
<accession>Q3YYF5</accession>
<protein>
    <recommendedName>
        <fullName evidence="1">Anaerobic nitric oxide reductase transcription regulator NorR</fullName>
    </recommendedName>
</protein>
<dbReference type="EMBL" id="CP000038">
    <property type="protein sequence ID" value="AAZ89457.1"/>
    <property type="status" value="ALT_INIT"/>
    <property type="molecule type" value="Genomic_DNA"/>
</dbReference>
<dbReference type="RefSeq" id="WP_000010780.1">
    <property type="nucleotide sequence ID" value="NC_007384.1"/>
</dbReference>
<dbReference type="SMR" id="Q3YYF5"/>
<dbReference type="GeneID" id="93779302"/>
<dbReference type="KEGG" id="ssn:SSON_2853"/>
<dbReference type="HOGENOM" id="CLU_000445_125_0_6"/>
<dbReference type="UniPathway" id="UPA00638"/>
<dbReference type="Proteomes" id="UP000002529">
    <property type="component" value="Chromosome"/>
</dbReference>
<dbReference type="GO" id="GO:0005524">
    <property type="term" value="F:ATP binding"/>
    <property type="evidence" value="ECO:0007669"/>
    <property type="project" value="UniProtKB-UniRule"/>
</dbReference>
<dbReference type="GO" id="GO:0016887">
    <property type="term" value="F:ATP hydrolysis activity"/>
    <property type="evidence" value="ECO:0007669"/>
    <property type="project" value="InterPro"/>
</dbReference>
<dbReference type="GO" id="GO:0003677">
    <property type="term" value="F:DNA binding"/>
    <property type="evidence" value="ECO:0007669"/>
    <property type="project" value="UniProtKB-KW"/>
</dbReference>
<dbReference type="GO" id="GO:0003700">
    <property type="term" value="F:DNA-binding transcription factor activity"/>
    <property type="evidence" value="ECO:0007669"/>
    <property type="project" value="UniProtKB-UniRule"/>
</dbReference>
<dbReference type="GO" id="GO:0000160">
    <property type="term" value="P:phosphorelay signal transduction system"/>
    <property type="evidence" value="ECO:0007669"/>
    <property type="project" value="UniProtKB-UniRule"/>
</dbReference>
<dbReference type="CDD" id="cd00009">
    <property type="entry name" value="AAA"/>
    <property type="match status" value="1"/>
</dbReference>
<dbReference type="FunFam" id="1.10.10.60:FF:000188">
    <property type="entry name" value="Anaerobic nitric oxide reductase transcription regulator NorR"/>
    <property type="match status" value="1"/>
</dbReference>
<dbReference type="FunFam" id="1.10.8.60:FF:000045">
    <property type="entry name" value="Anaerobic nitric oxide reductase transcription regulator NorR"/>
    <property type="match status" value="1"/>
</dbReference>
<dbReference type="FunFam" id="3.30.450.40:FF:000021">
    <property type="entry name" value="Anaerobic nitric oxide reductase transcription regulator NorR"/>
    <property type="match status" value="1"/>
</dbReference>
<dbReference type="FunFam" id="3.40.50.300:FF:000006">
    <property type="entry name" value="DNA-binding transcriptional regulator NtrC"/>
    <property type="match status" value="1"/>
</dbReference>
<dbReference type="Gene3D" id="1.10.8.60">
    <property type="match status" value="1"/>
</dbReference>
<dbReference type="Gene3D" id="3.30.450.40">
    <property type="match status" value="1"/>
</dbReference>
<dbReference type="Gene3D" id="1.10.10.60">
    <property type="entry name" value="Homeodomain-like"/>
    <property type="match status" value="1"/>
</dbReference>
<dbReference type="Gene3D" id="3.40.50.300">
    <property type="entry name" value="P-loop containing nucleotide triphosphate hydrolases"/>
    <property type="match status" value="1"/>
</dbReference>
<dbReference type="HAMAP" id="MF_01314">
    <property type="entry name" value="NorR"/>
    <property type="match status" value="1"/>
</dbReference>
<dbReference type="InterPro" id="IPR003593">
    <property type="entry name" value="AAA+_ATPase"/>
</dbReference>
<dbReference type="InterPro" id="IPR003018">
    <property type="entry name" value="GAF"/>
</dbReference>
<dbReference type="InterPro" id="IPR029016">
    <property type="entry name" value="GAF-like_dom_sf"/>
</dbReference>
<dbReference type="InterPro" id="IPR009057">
    <property type="entry name" value="Homeodomain-like_sf"/>
</dbReference>
<dbReference type="InterPro" id="IPR023944">
    <property type="entry name" value="NorR"/>
</dbReference>
<dbReference type="InterPro" id="IPR027417">
    <property type="entry name" value="P-loop_NTPase"/>
</dbReference>
<dbReference type="InterPro" id="IPR002078">
    <property type="entry name" value="Sigma_54_int"/>
</dbReference>
<dbReference type="InterPro" id="IPR025662">
    <property type="entry name" value="Sigma_54_int_dom_ATP-bd_1"/>
</dbReference>
<dbReference type="InterPro" id="IPR025943">
    <property type="entry name" value="Sigma_54_int_dom_ATP-bd_2"/>
</dbReference>
<dbReference type="InterPro" id="IPR025944">
    <property type="entry name" value="Sigma_54_int_dom_CS"/>
</dbReference>
<dbReference type="NCBIfam" id="NF003451">
    <property type="entry name" value="PRK05022.1"/>
    <property type="match status" value="1"/>
</dbReference>
<dbReference type="PANTHER" id="PTHR32071:SF35">
    <property type="entry name" value="ANAEROBIC NITRIC OXIDE REDUCTASE TRANSCRIPTION REGULATOR NORR"/>
    <property type="match status" value="1"/>
</dbReference>
<dbReference type="PANTHER" id="PTHR32071">
    <property type="entry name" value="TRANSCRIPTIONAL REGULATORY PROTEIN"/>
    <property type="match status" value="1"/>
</dbReference>
<dbReference type="Pfam" id="PF01590">
    <property type="entry name" value="GAF"/>
    <property type="match status" value="1"/>
</dbReference>
<dbReference type="Pfam" id="PF00158">
    <property type="entry name" value="Sigma54_activat"/>
    <property type="match status" value="1"/>
</dbReference>
<dbReference type="SMART" id="SM00382">
    <property type="entry name" value="AAA"/>
    <property type="match status" value="1"/>
</dbReference>
<dbReference type="SMART" id="SM00065">
    <property type="entry name" value="GAF"/>
    <property type="match status" value="1"/>
</dbReference>
<dbReference type="SUPFAM" id="SSF55781">
    <property type="entry name" value="GAF domain-like"/>
    <property type="match status" value="1"/>
</dbReference>
<dbReference type="SUPFAM" id="SSF46689">
    <property type="entry name" value="Homeodomain-like"/>
    <property type="match status" value="1"/>
</dbReference>
<dbReference type="SUPFAM" id="SSF52540">
    <property type="entry name" value="P-loop containing nucleoside triphosphate hydrolases"/>
    <property type="match status" value="1"/>
</dbReference>
<dbReference type="PROSITE" id="PS00675">
    <property type="entry name" value="SIGMA54_INTERACT_1"/>
    <property type="match status" value="1"/>
</dbReference>
<dbReference type="PROSITE" id="PS00676">
    <property type="entry name" value="SIGMA54_INTERACT_2"/>
    <property type="match status" value="1"/>
</dbReference>
<dbReference type="PROSITE" id="PS00688">
    <property type="entry name" value="SIGMA54_INTERACT_3"/>
    <property type="match status" value="1"/>
</dbReference>
<dbReference type="PROSITE" id="PS50045">
    <property type="entry name" value="SIGMA54_INTERACT_4"/>
    <property type="match status" value="1"/>
</dbReference>
<reference key="1">
    <citation type="journal article" date="2005" name="Nucleic Acids Res.">
        <title>Genome dynamics and diversity of Shigella species, the etiologic agents of bacillary dysentery.</title>
        <authorList>
            <person name="Yang F."/>
            <person name="Yang J."/>
            <person name="Zhang X."/>
            <person name="Chen L."/>
            <person name="Jiang Y."/>
            <person name="Yan Y."/>
            <person name="Tang X."/>
            <person name="Wang J."/>
            <person name="Xiong Z."/>
            <person name="Dong J."/>
            <person name="Xue Y."/>
            <person name="Zhu Y."/>
            <person name="Xu X."/>
            <person name="Sun L."/>
            <person name="Chen S."/>
            <person name="Nie H."/>
            <person name="Peng J."/>
            <person name="Xu J."/>
            <person name="Wang Y."/>
            <person name="Yuan Z."/>
            <person name="Wen Y."/>
            <person name="Yao Z."/>
            <person name="Shen Y."/>
            <person name="Qiang B."/>
            <person name="Hou Y."/>
            <person name="Yu J."/>
            <person name="Jin Q."/>
        </authorList>
    </citation>
    <scope>NUCLEOTIDE SEQUENCE [LARGE SCALE GENOMIC DNA]</scope>
    <source>
        <strain>Ss046</strain>
    </source>
</reference>
<name>NORR_SHISS</name>
<proteinExistence type="inferred from homology"/>